<dbReference type="EC" id="3.6.4.12" evidence="2"/>
<dbReference type="EMBL" id="DAAA02036045">
    <property type="status" value="NOT_ANNOTATED_CDS"/>
    <property type="molecule type" value="Genomic_DNA"/>
</dbReference>
<dbReference type="RefSeq" id="NP_001179965.1">
    <property type="nucleotide sequence ID" value="NM_001193036.1"/>
</dbReference>
<dbReference type="SMR" id="E1BPX4"/>
<dbReference type="FunCoup" id="E1BPX4">
    <property type="interactions" value="3021"/>
</dbReference>
<dbReference type="STRING" id="9913.ENSBTAP00000019471"/>
<dbReference type="PaxDb" id="9913-ENSBTAP00000019471"/>
<dbReference type="GeneID" id="507507"/>
<dbReference type="KEGG" id="bta:507507"/>
<dbReference type="CTD" id="84515"/>
<dbReference type="VEuPathDB" id="HostDB:ENSBTAG00000014623"/>
<dbReference type="eggNOG" id="KOG0480">
    <property type="taxonomic scope" value="Eukaryota"/>
</dbReference>
<dbReference type="HOGENOM" id="CLU_000995_7_2_1"/>
<dbReference type="InParanoid" id="E1BPX4"/>
<dbReference type="OMA" id="THTVDWQ"/>
<dbReference type="OrthoDB" id="422555at2759"/>
<dbReference type="TreeFam" id="TF323155"/>
<dbReference type="Reactome" id="R-BTA-176187">
    <property type="pathway name" value="Activation of ATR in response to replication stress"/>
</dbReference>
<dbReference type="Reactome" id="R-BTA-68689">
    <property type="pathway name" value="CDC6 association with the ORC:origin complex"/>
</dbReference>
<dbReference type="Reactome" id="R-BTA-68949">
    <property type="pathway name" value="Orc1 removal from chromatin"/>
</dbReference>
<dbReference type="Reactome" id="R-BTA-68962">
    <property type="pathway name" value="Activation of the pre-replicative complex"/>
</dbReference>
<dbReference type="Proteomes" id="UP000009136">
    <property type="component" value="Chromosome 13"/>
</dbReference>
<dbReference type="Bgee" id="ENSBTAG00000014623">
    <property type="expression patterns" value="Expressed in semen and 104 other cell types or tissues"/>
</dbReference>
<dbReference type="GO" id="GO:0005694">
    <property type="term" value="C:chromosome"/>
    <property type="evidence" value="ECO:0007669"/>
    <property type="project" value="UniProtKB-SubCell"/>
</dbReference>
<dbReference type="GO" id="GO:0042555">
    <property type="term" value="C:MCM complex"/>
    <property type="evidence" value="ECO:0000318"/>
    <property type="project" value="GO_Central"/>
</dbReference>
<dbReference type="GO" id="GO:0097362">
    <property type="term" value="C:MCM8-MCM9 complex"/>
    <property type="evidence" value="ECO:0000250"/>
    <property type="project" value="UniProtKB"/>
</dbReference>
<dbReference type="GO" id="GO:0005634">
    <property type="term" value="C:nucleus"/>
    <property type="evidence" value="ECO:0000318"/>
    <property type="project" value="GO_Central"/>
</dbReference>
<dbReference type="GO" id="GO:0005524">
    <property type="term" value="F:ATP binding"/>
    <property type="evidence" value="ECO:0007669"/>
    <property type="project" value="UniProtKB-KW"/>
</dbReference>
<dbReference type="GO" id="GO:0016887">
    <property type="term" value="F:ATP hydrolysis activity"/>
    <property type="evidence" value="ECO:0007669"/>
    <property type="project" value="InterPro"/>
</dbReference>
<dbReference type="GO" id="GO:0004386">
    <property type="term" value="F:helicase activity"/>
    <property type="evidence" value="ECO:0007669"/>
    <property type="project" value="UniProtKB-KW"/>
</dbReference>
<dbReference type="GO" id="GO:0003697">
    <property type="term" value="F:single-stranded DNA binding"/>
    <property type="evidence" value="ECO:0000318"/>
    <property type="project" value="GO_Central"/>
</dbReference>
<dbReference type="GO" id="GO:0006974">
    <property type="term" value="P:DNA damage response"/>
    <property type="evidence" value="ECO:0000250"/>
    <property type="project" value="UniProtKB"/>
</dbReference>
<dbReference type="GO" id="GO:0006260">
    <property type="term" value="P:DNA replication"/>
    <property type="evidence" value="ECO:0007669"/>
    <property type="project" value="UniProtKB-KW"/>
</dbReference>
<dbReference type="GO" id="GO:0000724">
    <property type="term" value="P:double-strand break repair via homologous recombination"/>
    <property type="evidence" value="ECO:0000250"/>
    <property type="project" value="UniProtKB"/>
</dbReference>
<dbReference type="GO" id="GO:0007292">
    <property type="term" value="P:female gamete generation"/>
    <property type="evidence" value="ECO:0000250"/>
    <property type="project" value="UniProtKB"/>
</dbReference>
<dbReference type="GO" id="GO:0048232">
    <property type="term" value="P:male gamete generation"/>
    <property type="evidence" value="ECO:0000250"/>
    <property type="project" value="UniProtKB"/>
</dbReference>
<dbReference type="CDD" id="cd17759">
    <property type="entry name" value="MCM8"/>
    <property type="match status" value="1"/>
</dbReference>
<dbReference type="CDD" id="cd22247">
    <property type="entry name" value="MCM8_WHD"/>
    <property type="match status" value="1"/>
</dbReference>
<dbReference type="FunFam" id="2.20.28.10:FF:000007">
    <property type="entry name" value="DNA helicase MCM8 isoform X1"/>
    <property type="match status" value="1"/>
</dbReference>
<dbReference type="Gene3D" id="2.20.28.10">
    <property type="match status" value="1"/>
</dbReference>
<dbReference type="Gene3D" id="2.40.50.140">
    <property type="entry name" value="Nucleic acid-binding proteins"/>
    <property type="match status" value="1"/>
</dbReference>
<dbReference type="Gene3D" id="3.40.50.300">
    <property type="entry name" value="P-loop containing nucleotide triphosphate hydrolases"/>
    <property type="match status" value="1"/>
</dbReference>
<dbReference type="InterPro" id="IPR003593">
    <property type="entry name" value="AAA+_ATPase"/>
</dbReference>
<dbReference type="InterPro" id="IPR031327">
    <property type="entry name" value="MCM"/>
</dbReference>
<dbReference type="InterPro" id="IPR056875">
    <property type="entry name" value="MCM8/REC_WHD"/>
</dbReference>
<dbReference type="InterPro" id="IPR001208">
    <property type="entry name" value="MCM_dom"/>
</dbReference>
<dbReference type="InterPro" id="IPR041562">
    <property type="entry name" value="MCM_lid"/>
</dbReference>
<dbReference type="InterPro" id="IPR033762">
    <property type="entry name" value="MCM_OB"/>
</dbReference>
<dbReference type="InterPro" id="IPR012340">
    <property type="entry name" value="NA-bd_OB-fold"/>
</dbReference>
<dbReference type="InterPro" id="IPR027417">
    <property type="entry name" value="P-loop_NTPase"/>
</dbReference>
<dbReference type="PANTHER" id="PTHR11630:SF47">
    <property type="entry name" value="DNA HELICASE MCM8"/>
    <property type="match status" value="1"/>
</dbReference>
<dbReference type="PANTHER" id="PTHR11630">
    <property type="entry name" value="DNA REPLICATION LICENSING FACTOR MCM FAMILY MEMBER"/>
    <property type="match status" value="1"/>
</dbReference>
<dbReference type="Pfam" id="PF00493">
    <property type="entry name" value="MCM"/>
    <property type="match status" value="1"/>
</dbReference>
<dbReference type="Pfam" id="PF17855">
    <property type="entry name" value="MCM_lid"/>
    <property type="match status" value="1"/>
</dbReference>
<dbReference type="Pfam" id="PF17207">
    <property type="entry name" value="MCM_OB"/>
    <property type="match status" value="1"/>
</dbReference>
<dbReference type="Pfam" id="PF25051">
    <property type="entry name" value="WHD_MCM8"/>
    <property type="match status" value="1"/>
</dbReference>
<dbReference type="PRINTS" id="PR01657">
    <property type="entry name" value="MCMFAMILY"/>
</dbReference>
<dbReference type="SMART" id="SM00382">
    <property type="entry name" value="AAA"/>
    <property type="match status" value="1"/>
</dbReference>
<dbReference type="SMART" id="SM00350">
    <property type="entry name" value="MCM"/>
    <property type="match status" value="1"/>
</dbReference>
<dbReference type="SUPFAM" id="SSF50249">
    <property type="entry name" value="Nucleic acid-binding proteins"/>
    <property type="match status" value="1"/>
</dbReference>
<dbReference type="SUPFAM" id="SSF52540">
    <property type="entry name" value="P-loop containing nucleoside triphosphate hydrolases"/>
    <property type="match status" value="1"/>
</dbReference>
<dbReference type="PROSITE" id="PS50051">
    <property type="entry name" value="MCM_2"/>
    <property type="match status" value="1"/>
</dbReference>
<accession>E1BPX4</accession>
<keyword id="KW-0067">ATP-binding</keyword>
<keyword id="KW-0131">Cell cycle</keyword>
<keyword id="KW-0158">Chromosome</keyword>
<keyword id="KW-0227">DNA damage</keyword>
<keyword id="KW-0234">DNA repair</keyword>
<keyword id="KW-0235">DNA replication</keyword>
<keyword id="KW-0238">DNA-binding</keyword>
<keyword id="KW-0347">Helicase</keyword>
<keyword id="KW-0378">Hydrolase</keyword>
<keyword id="KW-0547">Nucleotide-binding</keyword>
<keyword id="KW-0539">Nucleus</keyword>
<keyword id="KW-0597">Phosphoprotein</keyword>
<keyword id="KW-1185">Reference proteome</keyword>
<sequence>MNGKYRGRGFGQGRFQSWKSGRGGRGFSGKWREREHRPDLNKATGKHPEQTPQSLLLQSTLDHFIPYKGWKLYFSEVYSDSIPFIEKIEAFESFFTERIELYDKDEIERKGSILVDFKELINDDEIIKLIPNIANELRDTPEKTLACMGLAIHQVLTKDLERHAAELQAQEGLSRNGETVVNVPHIHARVYNYEPLTQLKNVRANYYGKYIALRGTVVRVSNTKPLCTKMAFLCAACGEIQSLSLPDGKYNLPTKCPVPACRGKSFTALRSSPLTVTMDWQSIKIQELMSDDQREAGRIPRTIECELVHDLVDSCVPGDTVTITGVVKVSNAEEANSVSNNKGQKTKASEDGCKHGALMEFSLKDLYAIQEIQSEENLFKLIVNSLCPVIFGHELVKAGLALALFGGSQKYADDKNRIPIRGDPHVLVVGDPGLGKSQMLQAVCSVAPRGVYVCGNTTTTSGLTVTLSKDSSSGDFALEAGALVLGDQGICGIDEFDKMGNQHQALLEAMEQQSISLAKAGMVCSLPARTSIIAAANPVGGHYNKAKTVSENLKMGSALLSRFDLVFILLDTPNEDHDHLLSEHVIAIRAGKQRAVSSATVARMNSQDSNTSILEVVSDKPLSERLKVVPGETIDPIPHQLLRKYIGYSRQYVYPRLSTEAAQILQNFYLELRKQSQRLSSSPITTRQLESLIRLTEARARLELREEATKEDAEDIVEIMKYSMLGTYSDEFGNLDFERSQHGSGMSNRSAAKRFISALNKIAERTYNNLFQFHQLQQIAKELNIQVADFENFIGSLNDQGYLLKKGPKVYQLQTM</sequence>
<name>MCM8_BOVIN</name>
<proteinExistence type="inferred from homology"/>
<reference key="1">
    <citation type="journal article" date="2009" name="Genome Biol.">
        <title>A whole-genome assembly of the domestic cow, Bos taurus.</title>
        <authorList>
            <person name="Zimin A.V."/>
            <person name="Delcher A.L."/>
            <person name="Florea L."/>
            <person name="Kelley D.R."/>
            <person name="Schatz M.C."/>
            <person name="Puiu D."/>
            <person name="Hanrahan F."/>
            <person name="Pertea G."/>
            <person name="Van Tassell C.P."/>
            <person name="Sonstegard T.S."/>
            <person name="Marcais G."/>
            <person name="Roberts M."/>
            <person name="Subramanian P."/>
            <person name="Yorke J.A."/>
            <person name="Salzberg S.L."/>
        </authorList>
    </citation>
    <scope>NUCLEOTIDE SEQUENCE [LARGE SCALE GENOMIC DNA]</scope>
    <source>
        <strain>Hereford</strain>
    </source>
</reference>
<evidence type="ECO:0000250" key="1">
    <source>
        <dbReference type="UniProtKB" id="Q9CWV1"/>
    </source>
</evidence>
<evidence type="ECO:0000250" key="2">
    <source>
        <dbReference type="UniProtKB" id="Q9UJA3"/>
    </source>
</evidence>
<evidence type="ECO:0000255" key="3"/>
<evidence type="ECO:0000256" key="4">
    <source>
        <dbReference type="SAM" id="MobiDB-lite"/>
    </source>
</evidence>
<evidence type="ECO:0000305" key="5"/>
<gene>
    <name type="primary">MCM8</name>
</gene>
<organism>
    <name type="scientific">Bos taurus</name>
    <name type="common">Bovine</name>
    <dbReference type="NCBI Taxonomy" id="9913"/>
    <lineage>
        <taxon>Eukaryota</taxon>
        <taxon>Metazoa</taxon>
        <taxon>Chordata</taxon>
        <taxon>Craniata</taxon>
        <taxon>Vertebrata</taxon>
        <taxon>Euteleostomi</taxon>
        <taxon>Mammalia</taxon>
        <taxon>Eutheria</taxon>
        <taxon>Laurasiatheria</taxon>
        <taxon>Artiodactyla</taxon>
        <taxon>Ruminantia</taxon>
        <taxon>Pecora</taxon>
        <taxon>Bovidae</taxon>
        <taxon>Bovinae</taxon>
        <taxon>Bos</taxon>
    </lineage>
</organism>
<feature type="chain" id="PRO_0000419470" description="DNA helicase MCM8">
    <location>
        <begin position="1"/>
        <end position="816"/>
    </location>
</feature>
<feature type="domain" description="MCM">
    <location>
        <begin position="378"/>
        <end position="585"/>
    </location>
</feature>
<feature type="region of interest" description="Disordered" evidence="4">
    <location>
        <begin position="1"/>
        <end position="52"/>
    </location>
</feature>
<feature type="compositionally biased region" description="Basic and acidic residues" evidence="4">
    <location>
        <begin position="30"/>
        <end position="40"/>
    </location>
</feature>
<feature type="binding site" evidence="3">
    <location>
        <begin position="430"/>
        <end position="437"/>
    </location>
    <ligand>
        <name>ATP</name>
        <dbReference type="ChEBI" id="CHEBI:30616"/>
    </ligand>
</feature>
<feature type="modified residue" description="Phosphoserine" evidence="2">
    <location>
        <position position="606"/>
    </location>
</feature>
<protein>
    <recommendedName>
        <fullName>DNA helicase MCM8</fullName>
        <ecNumber evidence="2">3.6.4.12</ecNumber>
    </recommendedName>
    <alternativeName>
        <fullName>Minichromosome maintenance 8</fullName>
    </alternativeName>
</protein>
<comment type="function">
    <text evidence="1 2">Component of the MCM8-MCM9 complex, a complex involved in the repair of double-stranded DNA breaks (DBSs) and DNA interstrand cross-links (ICLs) by homologous recombination (HR). Required for DNA resection by the MRE11-RAD50-NBN/NBS1 (MRN) complex by recruiting the MRN complex to the repair site and by promoting the complex nuclease activity. Probably by regulating the localization of the MNR complex, indirectly regulates the recruitment of downstream effector RAD51 to DNA damage sites including DBSs and ICLs. The MCM8-MCM9 complex is dispensable for DNA replication and S phase progression. However, may play a non-essential for DNA replication: may be involved in the activation of the prereplicative complex (pre-RC) during G(1) phase by recruiting CDC6 to the origin recognition complex (ORC). Probably by regulating HR, plays a key role during gametogenesis. Stabilizes MCM9 protein.</text>
</comment>
<comment type="catalytic activity">
    <reaction evidence="2">
        <text>ATP + H2O = ADP + phosphate + H(+)</text>
        <dbReference type="Rhea" id="RHEA:13065"/>
        <dbReference type="ChEBI" id="CHEBI:15377"/>
        <dbReference type="ChEBI" id="CHEBI:15378"/>
        <dbReference type="ChEBI" id="CHEBI:30616"/>
        <dbReference type="ChEBI" id="CHEBI:43474"/>
        <dbReference type="ChEBI" id="CHEBI:456216"/>
        <dbReference type="EC" id="3.6.4.12"/>
    </reaction>
</comment>
<comment type="subunit">
    <text evidence="2">Component of the MCM8-MCM9 complex, which forms a hexamer composed of MCM8 and MCM9. Interacts with the DNA mismatch repair (MMR) complex composed at least of MSH2, MSH3, MSH6, PMS1 and MLH1. Interacts with RAD51; the interaction recruits RAD51 to DNA damage sites. Interacts with the MRN complex composed of MRE11, RAD50 and NBN/NBS1. Interacts with CDC6 and ORC2. Interacts with HROB; the interaction recruits the MCM8-MCM9 complex to DNA damage sites (By similarity).</text>
</comment>
<comment type="subcellular location">
    <subcellularLocation>
        <location evidence="2">Nucleus</location>
    </subcellularLocation>
    <subcellularLocation>
        <location evidence="2">Chromosome</location>
    </subcellularLocation>
    <text evidence="2">Localizes to nuclear foci. Localizes to double-stranded DNA breaks. Binds chromatin throughout the cell cycle.</text>
</comment>
<comment type="similarity">
    <text evidence="5">Belongs to the MCM family.</text>
</comment>